<accession>Q1C1U5</accession>
<name>THIG_YERPA</name>
<reference key="1">
    <citation type="journal article" date="2006" name="J. Bacteriol.">
        <title>Complete genome sequence of Yersinia pestis strains Antiqua and Nepal516: evidence of gene reduction in an emerging pathogen.</title>
        <authorList>
            <person name="Chain P.S.G."/>
            <person name="Hu P."/>
            <person name="Malfatti S.A."/>
            <person name="Radnedge L."/>
            <person name="Larimer F."/>
            <person name="Vergez L.M."/>
            <person name="Worsham P."/>
            <person name="Chu M.C."/>
            <person name="Andersen G.L."/>
        </authorList>
    </citation>
    <scope>NUCLEOTIDE SEQUENCE [LARGE SCALE GENOMIC DNA]</scope>
    <source>
        <strain>Antiqua</strain>
    </source>
</reference>
<evidence type="ECO:0000255" key="1">
    <source>
        <dbReference type="HAMAP-Rule" id="MF_00443"/>
    </source>
</evidence>
<gene>
    <name evidence="1" type="primary">thiG</name>
    <name type="ordered locus">YPA_3615</name>
</gene>
<organism>
    <name type="scientific">Yersinia pestis bv. Antiqua (strain Antiqua)</name>
    <dbReference type="NCBI Taxonomy" id="360102"/>
    <lineage>
        <taxon>Bacteria</taxon>
        <taxon>Pseudomonadati</taxon>
        <taxon>Pseudomonadota</taxon>
        <taxon>Gammaproteobacteria</taxon>
        <taxon>Enterobacterales</taxon>
        <taxon>Yersiniaceae</taxon>
        <taxon>Yersinia</taxon>
    </lineage>
</organism>
<proteinExistence type="inferred from homology"/>
<protein>
    <recommendedName>
        <fullName evidence="1">Thiazole synthase</fullName>
        <ecNumber evidence="1">2.8.1.10</ecNumber>
    </recommendedName>
</protein>
<keyword id="KW-0963">Cytoplasm</keyword>
<keyword id="KW-0704">Schiff base</keyword>
<keyword id="KW-0784">Thiamine biosynthesis</keyword>
<keyword id="KW-0808">Transferase</keyword>
<comment type="function">
    <text evidence="1">Catalyzes the rearrangement of 1-deoxy-D-xylulose 5-phosphate (DXP) to produce the thiazole phosphate moiety of thiamine. Sulfur is provided by the thiocarboxylate moiety of the carrier protein ThiS. In vitro, sulfur can be provided by H(2)S.</text>
</comment>
<comment type="catalytic activity">
    <reaction evidence="1">
        <text>[ThiS sulfur-carrier protein]-C-terminal-Gly-aminoethanethioate + 2-iminoacetate + 1-deoxy-D-xylulose 5-phosphate = [ThiS sulfur-carrier protein]-C-terminal Gly-Gly + 2-[(2R,5Z)-2-carboxy-4-methylthiazol-5(2H)-ylidene]ethyl phosphate + 2 H2O + H(+)</text>
        <dbReference type="Rhea" id="RHEA:26297"/>
        <dbReference type="Rhea" id="RHEA-COMP:12909"/>
        <dbReference type="Rhea" id="RHEA-COMP:19908"/>
        <dbReference type="ChEBI" id="CHEBI:15377"/>
        <dbReference type="ChEBI" id="CHEBI:15378"/>
        <dbReference type="ChEBI" id="CHEBI:57792"/>
        <dbReference type="ChEBI" id="CHEBI:62899"/>
        <dbReference type="ChEBI" id="CHEBI:77846"/>
        <dbReference type="ChEBI" id="CHEBI:90778"/>
        <dbReference type="ChEBI" id="CHEBI:232372"/>
        <dbReference type="EC" id="2.8.1.10"/>
    </reaction>
</comment>
<comment type="pathway">
    <text evidence="1">Cofactor biosynthesis; thiamine diphosphate biosynthesis.</text>
</comment>
<comment type="subunit">
    <text evidence="1">Homotetramer. Forms heterodimers with either ThiH or ThiS.</text>
</comment>
<comment type="subcellular location">
    <subcellularLocation>
        <location evidence="1">Cytoplasm</location>
    </subcellularLocation>
</comment>
<comment type="similarity">
    <text evidence="1">Belongs to the ThiG family.</text>
</comment>
<dbReference type="EC" id="2.8.1.10" evidence="1"/>
<dbReference type="EMBL" id="CP000308">
    <property type="protein sequence ID" value="ABG15577.1"/>
    <property type="molecule type" value="Genomic_DNA"/>
</dbReference>
<dbReference type="RefSeq" id="WP_002228257.1">
    <property type="nucleotide sequence ID" value="NZ_CP009906.1"/>
</dbReference>
<dbReference type="SMR" id="Q1C1U5"/>
<dbReference type="KEGG" id="ypa:YPA_3615"/>
<dbReference type="UniPathway" id="UPA00060"/>
<dbReference type="Proteomes" id="UP000001971">
    <property type="component" value="Chromosome"/>
</dbReference>
<dbReference type="GO" id="GO:0005737">
    <property type="term" value="C:cytoplasm"/>
    <property type="evidence" value="ECO:0007669"/>
    <property type="project" value="UniProtKB-SubCell"/>
</dbReference>
<dbReference type="GO" id="GO:1990107">
    <property type="term" value="F:thiazole synthase activity"/>
    <property type="evidence" value="ECO:0007669"/>
    <property type="project" value="UniProtKB-EC"/>
</dbReference>
<dbReference type="GO" id="GO:0009229">
    <property type="term" value="P:thiamine diphosphate biosynthetic process"/>
    <property type="evidence" value="ECO:0007669"/>
    <property type="project" value="UniProtKB-UniRule"/>
</dbReference>
<dbReference type="CDD" id="cd04728">
    <property type="entry name" value="ThiG"/>
    <property type="match status" value="1"/>
</dbReference>
<dbReference type="FunFam" id="3.20.20.70:FF:000049">
    <property type="entry name" value="Thiazole synthase"/>
    <property type="match status" value="1"/>
</dbReference>
<dbReference type="Gene3D" id="3.20.20.70">
    <property type="entry name" value="Aldolase class I"/>
    <property type="match status" value="1"/>
</dbReference>
<dbReference type="HAMAP" id="MF_00443">
    <property type="entry name" value="ThiG"/>
    <property type="match status" value="1"/>
</dbReference>
<dbReference type="InterPro" id="IPR013785">
    <property type="entry name" value="Aldolase_TIM"/>
</dbReference>
<dbReference type="InterPro" id="IPR033983">
    <property type="entry name" value="Thiazole_synthase_ThiG"/>
</dbReference>
<dbReference type="InterPro" id="IPR008867">
    <property type="entry name" value="ThiG"/>
</dbReference>
<dbReference type="PANTHER" id="PTHR34266">
    <property type="entry name" value="THIAZOLE SYNTHASE"/>
    <property type="match status" value="1"/>
</dbReference>
<dbReference type="PANTHER" id="PTHR34266:SF2">
    <property type="entry name" value="THIAZOLE SYNTHASE"/>
    <property type="match status" value="1"/>
</dbReference>
<dbReference type="Pfam" id="PF05690">
    <property type="entry name" value="ThiG"/>
    <property type="match status" value="1"/>
</dbReference>
<dbReference type="SUPFAM" id="SSF110399">
    <property type="entry name" value="ThiG-like"/>
    <property type="match status" value="1"/>
</dbReference>
<sequence length="271" mass="28887">MLKIADTTFTSRLFTGTGKFSSPELMLEALRASGSQLITMAMKRVDLQSGNDAILAPLRQLGVRLLPNTSGAKTAEEAIFAARLAREALNTHWVKLEIHPDVRYLLPDPIETLKAAEVLVKEGFVVLPYCGADPVLCKRLEEVGCAAVMPLGSPIGSNLGLRTRDFLQIIIEQSKVPVVVDAGIGAPSHALEALELGADAVLVNTAIAVAHSPVQMAHAFRLAVESGERARLAGLGASPFNPSQPDTLQLRATATSPLTGFLSQLEEQDHV</sequence>
<feature type="chain" id="PRO_1000026057" description="Thiazole synthase">
    <location>
        <begin position="1"/>
        <end position="271"/>
    </location>
</feature>
<feature type="active site" description="Schiff-base intermediate with DXP" evidence="1">
    <location>
        <position position="95"/>
    </location>
</feature>
<feature type="binding site" evidence="1">
    <location>
        <position position="156"/>
    </location>
    <ligand>
        <name>1-deoxy-D-xylulose 5-phosphate</name>
        <dbReference type="ChEBI" id="CHEBI:57792"/>
    </ligand>
</feature>
<feature type="binding site" evidence="1">
    <location>
        <begin position="182"/>
        <end position="183"/>
    </location>
    <ligand>
        <name>1-deoxy-D-xylulose 5-phosphate</name>
        <dbReference type="ChEBI" id="CHEBI:57792"/>
    </ligand>
</feature>
<feature type="binding site" evidence="1">
    <location>
        <begin position="204"/>
        <end position="205"/>
    </location>
    <ligand>
        <name>1-deoxy-D-xylulose 5-phosphate</name>
        <dbReference type="ChEBI" id="CHEBI:57792"/>
    </ligand>
</feature>